<accession>P9WL87</accession>
<accession>L0TA33</accession>
<accession>P65017</accession>
<accession>Q50647</accession>
<sequence length="167" mass="19002">MYPCERVGLSFTETAPYLFRNTVDLAITPEQLFEVLADPQAWPRWATVITKVTWTSPEPFGAGTTRIVEMRGGIVGDEEFISWEPFTRMAFRFNECSTRAVGAFAEDYRVQAIPGGCRLTWTMAQKLAGPARPALFVFRPLLNLALRRFLRNLRRYTDARFAAAQQS</sequence>
<name>Y2574_MYCTU</name>
<reference key="1">
    <citation type="journal article" date="1998" name="Nature">
        <title>Deciphering the biology of Mycobacterium tuberculosis from the complete genome sequence.</title>
        <authorList>
            <person name="Cole S.T."/>
            <person name="Brosch R."/>
            <person name="Parkhill J."/>
            <person name="Garnier T."/>
            <person name="Churcher C.M."/>
            <person name="Harris D.E."/>
            <person name="Gordon S.V."/>
            <person name="Eiglmeier K."/>
            <person name="Gas S."/>
            <person name="Barry C.E. III"/>
            <person name="Tekaia F."/>
            <person name="Badcock K."/>
            <person name="Basham D."/>
            <person name="Brown D."/>
            <person name="Chillingworth T."/>
            <person name="Connor R."/>
            <person name="Davies R.M."/>
            <person name="Devlin K."/>
            <person name="Feltwell T."/>
            <person name="Gentles S."/>
            <person name="Hamlin N."/>
            <person name="Holroyd S."/>
            <person name="Hornsby T."/>
            <person name="Jagels K."/>
            <person name="Krogh A."/>
            <person name="McLean J."/>
            <person name="Moule S."/>
            <person name="Murphy L.D."/>
            <person name="Oliver S."/>
            <person name="Osborne J."/>
            <person name="Quail M.A."/>
            <person name="Rajandream M.A."/>
            <person name="Rogers J."/>
            <person name="Rutter S."/>
            <person name="Seeger K."/>
            <person name="Skelton S."/>
            <person name="Squares S."/>
            <person name="Squares R."/>
            <person name="Sulston J.E."/>
            <person name="Taylor K."/>
            <person name="Whitehead S."/>
            <person name="Barrell B.G."/>
        </authorList>
    </citation>
    <scope>NUCLEOTIDE SEQUENCE [LARGE SCALE GENOMIC DNA]</scope>
    <source>
        <strain>ATCC 25618 / H37Rv</strain>
    </source>
</reference>
<reference key="2">
    <citation type="journal article" date="2011" name="Mol. Cell. Proteomics">
        <title>Proteogenomic analysis of Mycobacterium tuberculosis by high resolution mass spectrometry.</title>
        <authorList>
            <person name="Kelkar D.S."/>
            <person name="Kumar D."/>
            <person name="Kumar P."/>
            <person name="Balakrishnan L."/>
            <person name="Muthusamy B."/>
            <person name="Yadav A.K."/>
            <person name="Shrivastava P."/>
            <person name="Marimuthu A."/>
            <person name="Anand S."/>
            <person name="Sundaram H."/>
            <person name="Kingsbury R."/>
            <person name="Harsha H.C."/>
            <person name="Nair B."/>
            <person name="Prasad T.S."/>
            <person name="Chauhan D.S."/>
            <person name="Katoch K."/>
            <person name="Katoch V.M."/>
            <person name="Kumar P."/>
            <person name="Chaerkady R."/>
            <person name="Ramachandran S."/>
            <person name="Dash D."/>
            <person name="Pandey A."/>
        </authorList>
    </citation>
    <scope>IDENTIFICATION BY MASS SPECTROMETRY [LARGE SCALE ANALYSIS]</scope>
    <source>
        <strain>ATCC 25618 / H37Rv</strain>
    </source>
</reference>
<protein>
    <recommendedName>
        <fullName>Uncharacterized protein Rv2574</fullName>
    </recommendedName>
</protein>
<dbReference type="EMBL" id="AL123456">
    <property type="protein sequence ID" value="CCP45370.1"/>
    <property type="molecule type" value="Genomic_DNA"/>
</dbReference>
<dbReference type="PIR" id="E70724">
    <property type="entry name" value="E70724"/>
</dbReference>
<dbReference type="RefSeq" id="NP_217090.1">
    <property type="nucleotide sequence ID" value="NC_000962.3"/>
</dbReference>
<dbReference type="RefSeq" id="WP_003413345.1">
    <property type="nucleotide sequence ID" value="NZ_NVQJ01000023.1"/>
</dbReference>
<dbReference type="SMR" id="P9WL87"/>
<dbReference type="STRING" id="83332.Rv2574"/>
<dbReference type="PaxDb" id="83332-Rv2574"/>
<dbReference type="GeneID" id="887232"/>
<dbReference type="KEGG" id="mtu:Rv2574"/>
<dbReference type="KEGG" id="mtv:RVBD_2574"/>
<dbReference type="TubercuList" id="Rv2574"/>
<dbReference type="eggNOG" id="COG3427">
    <property type="taxonomic scope" value="Bacteria"/>
</dbReference>
<dbReference type="InParanoid" id="P9WL87"/>
<dbReference type="OrthoDB" id="581838at2"/>
<dbReference type="Proteomes" id="UP000001584">
    <property type="component" value="Chromosome"/>
</dbReference>
<dbReference type="GO" id="GO:0005886">
    <property type="term" value="C:plasma membrane"/>
    <property type="evidence" value="ECO:0007005"/>
    <property type="project" value="MTBBASE"/>
</dbReference>
<dbReference type="CDD" id="cd07821">
    <property type="entry name" value="PYR_PYL_RCAR_like"/>
    <property type="match status" value="1"/>
</dbReference>
<dbReference type="Gene3D" id="3.30.530.20">
    <property type="match status" value="1"/>
</dbReference>
<dbReference type="InterPro" id="IPR019587">
    <property type="entry name" value="Polyketide_cyclase/dehydratase"/>
</dbReference>
<dbReference type="InterPro" id="IPR023393">
    <property type="entry name" value="START-like_dom_sf"/>
</dbReference>
<dbReference type="Pfam" id="PF10604">
    <property type="entry name" value="Polyketide_cyc2"/>
    <property type="match status" value="1"/>
</dbReference>
<dbReference type="SUPFAM" id="SSF55961">
    <property type="entry name" value="Bet v1-like"/>
    <property type="match status" value="1"/>
</dbReference>
<gene>
    <name type="ordered locus">Rv2574</name>
    <name type="ORF">MTCY227.27c</name>
</gene>
<proteinExistence type="evidence at protein level"/>
<keyword id="KW-1185">Reference proteome</keyword>
<feature type="chain" id="PRO_0000104054" description="Uncharacterized protein Rv2574">
    <location>
        <begin position="1"/>
        <end position="167"/>
    </location>
</feature>
<organism>
    <name type="scientific">Mycobacterium tuberculosis (strain ATCC 25618 / H37Rv)</name>
    <dbReference type="NCBI Taxonomy" id="83332"/>
    <lineage>
        <taxon>Bacteria</taxon>
        <taxon>Bacillati</taxon>
        <taxon>Actinomycetota</taxon>
        <taxon>Actinomycetes</taxon>
        <taxon>Mycobacteriales</taxon>
        <taxon>Mycobacteriaceae</taxon>
        <taxon>Mycobacterium</taxon>
        <taxon>Mycobacterium tuberculosis complex</taxon>
    </lineage>
</organism>